<comment type="catalytic activity">
    <reaction evidence="1">
        <text>tRNA(Arg) + L-arginine + ATP = L-arginyl-tRNA(Arg) + AMP + diphosphate</text>
        <dbReference type="Rhea" id="RHEA:20301"/>
        <dbReference type="Rhea" id="RHEA-COMP:9658"/>
        <dbReference type="Rhea" id="RHEA-COMP:9673"/>
        <dbReference type="ChEBI" id="CHEBI:30616"/>
        <dbReference type="ChEBI" id="CHEBI:32682"/>
        <dbReference type="ChEBI" id="CHEBI:33019"/>
        <dbReference type="ChEBI" id="CHEBI:78442"/>
        <dbReference type="ChEBI" id="CHEBI:78513"/>
        <dbReference type="ChEBI" id="CHEBI:456215"/>
        <dbReference type="EC" id="6.1.1.19"/>
    </reaction>
</comment>
<comment type="subunit">
    <text evidence="1">Monomer.</text>
</comment>
<comment type="subcellular location">
    <subcellularLocation>
        <location evidence="1">Cytoplasm</location>
    </subcellularLocation>
</comment>
<comment type="similarity">
    <text evidence="1">Belongs to the class-I aminoacyl-tRNA synthetase family.</text>
</comment>
<gene>
    <name evidence="1" type="primary">argS</name>
    <name type="ordered locus">mma_0113</name>
</gene>
<feature type="chain" id="PRO_1000018045" description="Arginine--tRNA ligase">
    <location>
        <begin position="1"/>
        <end position="577"/>
    </location>
</feature>
<feature type="short sequence motif" description="'HIGH' region">
    <location>
        <begin position="132"/>
        <end position="142"/>
    </location>
</feature>
<evidence type="ECO:0000255" key="1">
    <source>
        <dbReference type="HAMAP-Rule" id="MF_00123"/>
    </source>
</evidence>
<dbReference type="EC" id="6.1.1.19" evidence="1"/>
<dbReference type="EMBL" id="CP000269">
    <property type="protein sequence ID" value="ABR88723.1"/>
    <property type="molecule type" value="Genomic_DNA"/>
</dbReference>
<dbReference type="RefSeq" id="WP_011979339.1">
    <property type="nucleotide sequence ID" value="NC_009659.1"/>
</dbReference>
<dbReference type="SMR" id="A6SU56"/>
<dbReference type="STRING" id="375286.mma_0113"/>
<dbReference type="KEGG" id="mms:mma_0113"/>
<dbReference type="eggNOG" id="COG0018">
    <property type="taxonomic scope" value="Bacteria"/>
</dbReference>
<dbReference type="HOGENOM" id="CLU_006406_0_1_4"/>
<dbReference type="OrthoDB" id="9803211at2"/>
<dbReference type="Proteomes" id="UP000006388">
    <property type="component" value="Chromosome"/>
</dbReference>
<dbReference type="GO" id="GO:0005737">
    <property type="term" value="C:cytoplasm"/>
    <property type="evidence" value="ECO:0007669"/>
    <property type="project" value="UniProtKB-SubCell"/>
</dbReference>
<dbReference type="GO" id="GO:0004814">
    <property type="term" value="F:arginine-tRNA ligase activity"/>
    <property type="evidence" value="ECO:0007669"/>
    <property type="project" value="UniProtKB-UniRule"/>
</dbReference>
<dbReference type="GO" id="GO:0005524">
    <property type="term" value="F:ATP binding"/>
    <property type="evidence" value="ECO:0007669"/>
    <property type="project" value="UniProtKB-UniRule"/>
</dbReference>
<dbReference type="GO" id="GO:0006420">
    <property type="term" value="P:arginyl-tRNA aminoacylation"/>
    <property type="evidence" value="ECO:0007669"/>
    <property type="project" value="UniProtKB-UniRule"/>
</dbReference>
<dbReference type="CDD" id="cd07956">
    <property type="entry name" value="Anticodon_Ia_Arg"/>
    <property type="match status" value="1"/>
</dbReference>
<dbReference type="CDD" id="cd00671">
    <property type="entry name" value="ArgRS_core"/>
    <property type="match status" value="1"/>
</dbReference>
<dbReference type="FunFam" id="1.10.730.10:FF:000008">
    <property type="entry name" value="Arginine--tRNA ligase"/>
    <property type="match status" value="1"/>
</dbReference>
<dbReference type="FunFam" id="3.40.50.620:FF:000062">
    <property type="entry name" value="Arginine--tRNA ligase"/>
    <property type="match status" value="1"/>
</dbReference>
<dbReference type="Gene3D" id="3.30.1360.70">
    <property type="entry name" value="Arginyl tRNA synthetase N-terminal domain"/>
    <property type="match status" value="1"/>
</dbReference>
<dbReference type="Gene3D" id="3.40.50.620">
    <property type="entry name" value="HUPs"/>
    <property type="match status" value="1"/>
</dbReference>
<dbReference type="Gene3D" id="1.10.730.10">
    <property type="entry name" value="Isoleucyl-tRNA Synthetase, Domain 1"/>
    <property type="match status" value="1"/>
</dbReference>
<dbReference type="HAMAP" id="MF_00123">
    <property type="entry name" value="Arg_tRNA_synth"/>
    <property type="match status" value="1"/>
</dbReference>
<dbReference type="InterPro" id="IPR001412">
    <property type="entry name" value="aa-tRNA-synth_I_CS"/>
</dbReference>
<dbReference type="InterPro" id="IPR001278">
    <property type="entry name" value="Arg-tRNA-ligase"/>
</dbReference>
<dbReference type="InterPro" id="IPR005148">
    <property type="entry name" value="Arg-tRNA-synth_N"/>
</dbReference>
<dbReference type="InterPro" id="IPR036695">
    <property type="entry name" value="Arg-tRNA-synth_N_sf"/>
</dbReference>
<dbReference type="InterPro" id="IPR035684">
    <property type="entry name" value="ArgRS_core"/>
</dbReference>
<dbReference type="InterPro" id="IPR008909">
    <property type="entry name" value="DALR_anticod-bd"/>
</dbReference>
<dbReference type="InterPro" id="IPR014729">
    <property type="entry name" value="Rossmann-like_a/b/a_fold"/>
</dbReference>
<dbReference type="InterPro" id="IPR009080">
    <property type="entry name" value="tRNAsynth_Ia_anticodon-bd"/>
</dbReference>
<dbReference type="NCBIfam" id="TIGR00456">
    <property type="entry name" value="argS"/>
    <property type="match status" value="1"/>
</dbReference>
<dbReference type="PANTHER" id="PTHR11956:SF5">
    <property type="entry name" value="ARGININE--TRNA LIGASE, CYTOPLASMIC"/>
    <property type="match status" value="1"/>
</dbReference>
<dbReference type="PANTHER" id="PTHR11956">
    <property type="entry name" value="ARGINYL-TRNA SYNTHETASE"/>
    <property type="match status" value="1"/>
</dbReference>
<dbReference type="Pfam" id="PF03485">
    <property type="entry name" value="Arg_tRNA_synt_N"/>
    <property type="match status" value="1"/>
</dbReference>
<dbReference type="Pfam" id="PF05746">
    <property type="entry name" value="DALR_1"/>
    <property type="match status" value="1"/>
</dbReference>
<dbReference type="Pfam" id="PF00750">
    <property type="entry name" value="tRNA-synt_1d"/>
    <property type="match status" value="1"/>
</dbReference>
<dbReference type="PRINTS" id="PR01038">
    <property type="entry name" value="TRNASYNTHARG"/>
</dbReference>
<dbReference type="SMART" id="SM01016">
    <property type="entry name" value="Arg_tRNA_synt_N"/>
    <property type="match status" value="1"/>
</dbReference>
<dbReference type="SMART" id="SM00836">
    <property type="entry name" value="DALR_1"/>
    <property type="match status" value="1"/>
</dbReference>
<dbReference type="SUPFAM" id="SSF47323">
    <property type="entry name" value="Anticodon-binding domain of a subclass of class I aminoacyl-tRNA synthetases"/>
    <property type="match status" value="1"/>
</dbReference>
<dbReference type="SUPFAM" id="SSF55190">
    <property type="entry name" value="Arginyl-tRNA synthetase (ArgRS), N-terminal 'additional' domain"/>
    <property type="match status" value="1"/>
</dbReference>
<dbReference type="SUPFAM" id="SSF52374">
    <property type="entry name" value="Nucleotidylyl transferase"/>
    <property type="match status" value="1"/>
</dbReference>
<dbReference type="PROSITE" id="PS00178">
    <property type="entry name" value="AA_TRNA_LIGASE_I"/>
    <property type="match status" value="1"/>
</dbReference>
<sequence>MLAAQKQRLTELFQAAVAPLVASTDLQPTITLERPRDPSHGDVACNLAMQIAKPLKKNPREVAQALAAALLDNPANRDLIEAADIAGPGFINLRLTAASRQAVVKTVLQQGAEFGKSNLGNDKKVIIEFVSANPTGPLHVGHGRQGALGDAMSSLFQAQGYDVTREFYYNDAGVQIATLATSVQARGKGLKPGVEGWPESAYNGDYIQDIANDFLAKKTVSASNGEPVTASGDINDIESIRQFSVTYLRREQDLDLQAFGVKFDNYYLESSLYADGKVEKTVDALIKADKTYELDGALWLRTTDYRDDKDRVMKKSDGTYTYFVPDVAYHTVKWQRGFTQAINVQGSDHHGTIARVRAGLQALDIGIPQGYPDYVLHKMVTVMRNGEEVKISKRAGSYVTLRDLIEWSNGEVVDGEVRDLTRGRDAVRFFLISRKADTEFVFDVDIALTQGDENPVYYVQYAHARICSVLAQWTDGDEASLDKVDLSPLTAARETALLAKLAEYPETLQKALEELGPHQVAFYLRDLAGELHSYYNAERVLVDDEALKMARIALMSATRQVLRNGLALIGVSAPARM</sequence>
<accession>A6SU56</accession>
<name>SYR_JANMA</name>
<keyword id="KW-0030">Aminoacyl-tRNA synthetase</keyword>
<keyword id="KW-0067">ATP-binding</keyword>
<keyword id="KW-0963">Cytoplasm</keyword>
<keyword id="KW-0436">Ligase</keyword>
<keyword id="KW-0547">Nucleotide-binding</keyword>
<keyword id="KW-0648">Protein biosynthesis</keyword>
<proteinExistence type="inferred from homology"/>
<protein>
    <recommendedName>
        <fullName evidence="1">Arginine--tRNA ligase</fullName>
        <ecNumber evidence="1">6.1.1.19</ecNumber>
    </recommendedName>
    <alternativeName>
        <fullName evidence="1">Arginyl-tRNA synthetase</fullName>
        <shortName evidence="1">ArgRS</shortName>
    </alternativeName>
</protein>
<reference key="1">
    <citation type="journal article" date="2007" name="PLoS Genet.">
        <title>Genome analysis of Minibacterium massiliensis highlights the convergent evolution of water-living bacteria.</title>
        <authorList>
            <person name="Audic S."/>
            <person name="Robert C."/>
            <person name="Campagna B."/>
            <person name="Parinello H."/>
            <person name="Claverie J.-M."/>
            <person name="Raoult D."/>
            <person name="Drancourt M."/>
        </authorList>
    </citation>
    <scope>NUCLEOTIDE SEQUENCE [LARGE SCALE GENOMIC DNA]</scope>
    <source>
        <strain>Marseille</strain>
    </source>
</reference>
<organism>
    <name type="scientific">Janthinobacterium sp. (strain Marseille)</name>
    <name type="common">Minibacterium massiliensis</name>
    <dbReference type="NCBI Taxonomy" id="375286"/>
    <lineage>
        <taxon>Bacteria</taxon>
        <taxon>Pseudomonadati</taxon>
        <taxon>Pseudomonadota</taxon>
        <taxon>Betaproteobacteria</taxon>
        <taxon>Burkholderiales</taxon>
        <taxon>Oxalobacteraceae</taxon>
        <taxon>Janthinobacterium</taxon>
    </lineage>
</organism>